<feature type="signal peptide" evidence="1">
    <location>
        <begin position="1"/>
        <end position="18"/>
    </location>
</feature>
<feature type="chain" id="PRO_0000344485" description="Adhesin MafA 1">
    <location>
        <begin position="19"/>
        <end position="320"/>
    </location>
</feature>
<feature type="region of interest" description="Disordered" evidence="2">
    <location>
        <begin position="288"/>
        <end position="320"/>
    </location>
</feature>
<feature type="lipid moiety-binding region" description="N-palmitoyl cysteine" evidence="1">
    <location>
        <position position="19"/>
    </location>
</feature>
<feature type="lipid moiety-binding region" description="S-diacylglycerol cysteine" evidence="1">
    <location>
        <position position="19"/>
    </location>
</feature>
<reference key="1">
    <citation type="journal article" date="2000" name="Nature">
        <title>Complete DNA sequence of a serogroup A strain of Neisseria meningitidis Z2491.</title>
        <authorList>
            <person name="Parkhill J."/>
            <person name="Achtman M."/>
            <person name="James K.D."/>
            <person name="Bentley S.D."/>
            <person name="Churcher C.M."/>
            <person name="Klee S.R."/>
            <person name="Morelli G."/>
            <person name="Basham D."/>
            <person name="Brown D."/>
            <person name="Chillingworth T."/>
            <person name="Davies R.M."/>
            <person name="Davis P."/>
            <person name="Devlin K."/>
            <person name="Feltwell T."/>
            <person name="Hamlin N."/>
            <person name="Holroyd S."/>
            <person name="Jagels K."/>
            <person name="Leather S."/>
            <person name="Moule S."/>
            <person name="Mungall K.L."/>
            <person name="Quail M.A."/>
            <person name="Rajandream M.A."/>
            <person name="Rutherford K.M."/>
            <person name="Simmonds M."/>
            <person name="Skelton J."/>
            <person name="Whitehead S."/>
            <person name="Spratt B.G."/>
            <person name="Barrell B.G."/>
        </authorList>
    </citation>
    <scope>NUCLEOTIDE SEQUENCE [LARGE SCALE GENOMIC DNA]</scope>
    <source>
        <strain>DSM 15465 / Z2491</strain>
    </source>
</reference>
<dbReference type="EMBL" id="AL157959">
    <property type="protein sequence ID" value="CAM07627.1"/>
    <property type="molecule type" value="Genomic_DNA"/>
</dbReference>
<dbReference type="PIR" id="C82028">
    <property type="entry name" value="C82028"/>
</dbReference>
<dbReference type="EnsemblBacteria" id="CAM07627">
    <property type="protein sequence ID" value="CAM07627"/>
    <property type="gene ID" value="NMA0325"/>
</dbReference>
<dbReference type="KEGG" id="nma:NMA0325"/>
<dbReference type="HOGENOM" id="CLU_985210_0_0_4"/>
<dbReference type="Proteomes" id="UP000000626">
    <property type="component" value="Chromosome"/>
</dbReference>
<dbReference type="GO" id="GO:0009279">
    <property type="term" value="C:cell outer membrane"/>
    <property type="evidence" value="ECO:0007669"/>
    <property type="project" value="UniProtKB-SubCell"/>
</dbReference>
<dbReference type="GO" id="GO:0007155">
    <property type="term" value="P:cell adhesion"/>
    <property type="evidence" value="ECO:0007669"/>
    <property type="project" value="UniProtKB-KW"/>
</dbReference>
<dbReference type="PROSITE" id="PS51257">
    <property type="entry name" value="PROKAR_LIPOPROTEIN"/>
    <property type="match status" value="1"/>
</dbReference>
<comment type="subcellular location">
    <subcellularLocation>
        <location evidence="3">Cell outer membrane</location>
        <topology evidence="1">Lipid-anchor</topology>
    </subcellularLocation>
</comment>
<comment type="similarity">
    <text evidence="3">Belongs to the MafA family.</text>
</comment>
<protein>
    <recommendedName>
        <fullName>Adhesin MafA 1</fullName>
    </recommendedName>
</protein>
<keyword id="KW-0130">Cell adhesion</keyword>
<keyword id="KW-0998">Cell outer membrane</keyword>
<keyword id="KW-0449">Lipoprotein</keyword>
<keyword id="KW-0472">Membrane</keyword>
<keyword id="KW-0564">Palmitate</keyword>
<keyword id="KW-0732">Signal</keyword>
<keyword id="KW-0843">Virulence</keyword>
<proteinExistence type="inferred from homology"/>
<sequence>MQARLLIPILFSVFILSACGTLTGIPSHGGGKRFAVEQELVAASARAAVKDMDLQALHGRKVALYIATMGDQGSGSLTGGRYSIDALIRGEYINSPAVRTDYTYPRYETTAETTSGGLTGLTTSLSTLNAPALSRTQSDGSGSKSSLGLNIGGMGDYRNETLTTNPRDTAFLSHLVQTVFFLRGIDVVSPANADTDVFINIDVFGTIRNRTEMHLYNAETLKAQTKLEYFAVDRTNKKLLIKPKTNAFEAAYKENYALWMGPYKVSKGIKPTEGLMVDFSDIQPYGNHMGNSAPSVEADNSHEGYGYSDEAVRRHRQGQP</sequence>
<name>MAFA1_NEIMA</name>
<organism>
    <name type="scientific">Neisseria meningitidis serogroup A / serotype 4A (strain DSM 15465 / Z2491)</name>
    <dbReference type="NCBI Taxonomy" id="122587"/>
    <lineage>
        <taxon>Bacteria</taxon>
        <taxon>Pseudomonadati</taxon>
        <taxon>Pseudomonadota</taxon>
        <taxon>Betaproteobacteria</taxon>
        <taxon>Neisseriales</taxon>
        <taxon>Neisseriaceae</taxon>
        <taxon>Neisseria</taxon>
    </lineage>
</organism>
<evidence type="ECO:0000255" key="1">
    <source>
        <dbReference type="PROSITE-ProRule" id="PRU00303"/>
    </source>
</evidence>
<evidence type="ECO:0000256" key="2">
    <source>
        <dbReference type="SAM" id="MobiDB-lite"/>
    </source>
</evidence>
<evidence type="ECO:0000305" key="3"/>
<accession>A1IPF8</accession>
<gene>
    <name type="primary">mafA1</name>
    <name type="ordered locus">NMA0325</name>
</gene>